<geneLocation type="mitochondrion"/>
<proteinExistence type="inferred from homology"/>
<organism>
    <name type="scientific">Hydrurga leptonyx</name>
    <name type="common">Leopard seal</name>
    <name type="synonym">Phoca leptonyx</name>
    <dbReference type="NCBI Taxonomy" id="29086"/>
    <lineage>
        <taxon>Eukaryota</taxon>
        <taxon>Metazoa</taxon>
        <taxon>Chordata</taxon>
        <taxon>Craniata</taxon>
        <taxon>Vertebrata</taxon>
        <taxon>Euteleostomi</taxon>
        <taxon>Mammalia</taxon>
        <taxon>Eutheria</taxon>
        <taxon>Laurasiatheria</taxon>
        <taxon>Carnivora</taxon>
        <taxon>Caniformia</taxon>
        <taxon>Pinnipedia</taxon>
        <taxon>Phocidae</taxon>
        <taxon>Monachinae</taxon>
        <taxon>Lobodontini</taxon>
        <taxon>Hydrurga</taxon>
    </lineage>
</organism>
<dbReference type="EC" id="7.1.1.2"/>
<dbReference type="EMBL" id="AY377226">
    <property type="protein sequence ID" value="AAQ93765.1"/>
    <property type="molecule type" value="Genomic_DNA"/>
</dbReference>
<dbReference type="EMBL" id="AY377227">
    <property type="protein sequence ID" value="AAQ93766.1"/>
    <property type="molecule type" value="Genomic_DNA"/>
</dbReference>
<dbReference type="EMBL" id="AM181026">
    <property type="protein sequence ID" value="CAJ57009.1"/>
    <property type="molecule type" value="Genomic_DNA"/>
</dbReference>
<dbReference type="RefSeq" id="YP_778820.1">
    <property type="nucleotide sequence ID" value="NC_008425.1"/>
</dbReference>
<dbReference type="SMR" id="Q679B8"/>
<dbReference type="GeneID" id="4356009"/>
<dbReference type="CTD" id="4539"/>
<dbReference type="GO" id="GO:0005743">
    <property type="term" value="C:mitochondrial inner membrane"/>
    <property type="evidence" value="ECO:0000250"/>
    <property type="project" value="UniProtKB"/>
</dbReference>
<dbReference type="GO" id="GO:0045271">
    <property type="term" value="C:respiratory chain complex I"/>
    <property type="evidence" value="ECO:0000250"/>
    <property type="project" value="UniProtKB"/>
</dbReference>
<dbReference type="GO" id="GO:0008137">
    <property type="term" value="F:NADH dehydrogenase (ubiquinone) activity"/>
    <property type="evidence" value="ECO:0000250"/>
    <property type="project" value="UniProtKB"/>
</dbReference>
<dbReference type="GO" id="GO:0042773">
    <property type="term" value="P:ATP synthesis coupled electron transport"/>
    <property type="evidence" value="ECO:0007669"/>
    <property type="project" value="InterPro"/>
</dbReference>
<dbReference type="FunFam" id="1.10.287.3510:FF:000002">
    <property type="entry name" value="NADH-ubiquinone oxidoreductase chain 4L"/>
    <property type="match status" value="1"/>
</dbReference>
<dbReference type="Gene3D" id="1.10.287.3510">
    <property type="match status" value="1"/>
</dbReference>
<dbReference type="InterPro" id="IPR001133">
    <property type="entry name" value="NADH_UbQ_OxRdtase_chain4L/K"/>
</dbReference>
<dbReference type="InterPro" id="IPR039428">
    <property type="entry name" value="NUOK/Mnh_C1-like"/>
</dbReference>
<dbReference type="PANTHER" id="PTHR11434:SF0">
    <property type="entry name" value="NADH-UBIQUINONE OXIDOREDUCTASE CHAIN 4L"/>
    <property type="match status" value="1"/>
</dbReference>
<dbReference type="PANTHER" id="PTHR11434">
    <property type="entry name" value="NADH-UBIQUINONE OXIDOREDUCTASE SUBUNIT ND4L"/>
    <property type="match status" value="1"/>
</dbReference>
<dbReference type="Pfam" id="PF00420">
    <property type="entry name" value="Oxidored_q2"/>
    <property type="match status" value="1"/>
</dbReference>
<evidence type="ECO:0000250" key="1">
    <source>
        <dbReference type="UniProtKB" id="P03901"/>
    </source>
</evidence>
<evidence type="ECO:0000250" key="2">
    <source>
        <dbReference type="UniProtKB" id="P03902"/>
    </source>
</evidence>
<evidence type="ECO:0000255" key="3"/>
<evidence type="ECO:0000305" key="4"/>
<gene>
    <name type="primary">MT-ND4L</name>
    <name type="synonym">MTND4L</name>
    <name type="synonym">NADH4L</name>
    <name type="synonym">ND4L</name>
</gene>
<feature type="chain" id="PRO_0000118432" description="NADH-ubiquinone oxidoreductase chain 4L">
    <location>
        <begin position="1"/>
        <end position="98"/>
    </location>
</feature>
<feature type="transmembrane region" description="Helical" evidence="3">
    <location>
        <begin position="1"/>
        <end position="21"/>
    </location>
</feature>
<feature type="transmembrane region" description="Helical" evidence="3">
    <location>
        <begin position="29"/>
        <end position="49"/>
    </location>
</feature>
<feature type="transmembrane region" description="Helical" evidence="3">
    <location>
        <begin position="61"/>
        <end position="81"/>
    </location>
</feature>
<reference key="1">
    <citation type="journal article" date="2004" name="Mol. Phylogenet. Evol.">
        <title>A phylogeny of the extant Phocidae inferred from complete mitochondrial DNA coding regions.</title>
        <authorList>
            <person name="Davis C.S."/>
            <person name="Delisle I."/>
            <person name="Stirling I."/>
            <person name="Siniff D.B."/>
            <person name="Strobeck C."/>
        </authorList>
    </citation>
    <scope>NUCLEOTIDE SEQUENCE [GENOMIC DNA]</scope>
</reference>
<reference key="2">
    <citation type="journal article" date="2006" name="Mol. Phylogenet. Evol.">
        <title>Pinniped phylogeny and a new hypothesis for their origin and dispersal.</title>
        <authorList>
            <person name="Arnason U."/>
            <person name="Gullberg A."/>
            <person name="Janke A."/>
            <person name="Kullberg M."/>
            <person name="Lehman N."/>
            <person name="Petrov E.A."/>
            <person name="Vainola R."/>
        </authorList>
    </citation>
    <scope>NUCLEOTIDE SEQUENCE [GENOMIC DNA]</scope>
</reference>
<accession>Q679B8</accession>
<accession>Q08H89</accession>
<keyword id="KW-0249">Electron transport</keyword>
<keyword id="KW-0472">Membrane</keyword>
<keyword id="KW-0496">Mitochondrion</keyword>
<keyword id="KW-0999">Mitochondrion inner membrane</keyword>
<keyword id="KW-0520">NAD</keyword>
<keyword id="KW-0679">Respiratory chain</keyword>
<keyword id="KW-1278">Translocase</keyword>
<keyword id="KW-0812">Transmembrane</keyword>
<keyword id="KW-1133">Transmembrane helix</keyword>
<keyword id="KW-0813">Transport</keyword>
<keyword id="KW-0830">Ubiquinone</keyword>
<sequence length="98" mass="10868">MTMVYANIFLAFITSLMGLLMYRSHLMSSLLCLEGMMLSLFVMMTVTILNNHFTLASMTPIILLVFAACEAALGLSLLVMVSNTYGTDYVQNLNLLQC</sequence>
<protein>
    <recommendedName>
        <fullName>NADH-ubiquinone oxidoreductase chain 4L</fullName>
        <ecNumber>7.1.1.2</ecNumber>
    </recommendedName>
    <alternativeName>
        <fullName>NADH dehydrogenase subunit 4L</fullName>
    </alternativeName>
</protein>
<comment type="function">
    <text evidence="1">Core subunit of the mitochondrial membrane respiratory chain NADH dehydrogenase (Complex I) which catalyzes electron transfer from NADH through the respiratory chain, using ubiquinone as an electron acceptor. Part of the enzyme membrane arm which is embedded in the lipid bilayer and involved in proton translocation.</text>
</comment>
<comment type="catalytic activity">
    <reaction evidence="1">
        <text>a ubiquinone + NADH + 5 H(+)(in) = a ubiquinol + NAD(+) + 4 H(+)(out)</text>
        <dbReference type="Rhea" id="RHEA:29091"/>
        <dbReference type="Rhea" id="RHEA-COMP:9565"/>
        <dbReference type="Rhea" id="RHEA-COMP:9566"/>
        <dbReference type="ChEBI" id="CHEBI:15378"/>
        <dbReference type="ChEBI" id="CHEBI:16389"/>
        <dbReference type="ChEBI" id="CHEBI:17976"/>
        <dbReference type="ChEBI" id="CHEBI:57540"/>
        <dbReference type="ChEBI" id="CHEBI:57945"/>
        <dbReference type="EC" id="7.1.1.2"/>
    </reaction>
    <physiologicalReaction direction="left-to-right" evidence="1">
        <dbReference type="Rhea" id="RHEA:29092"/>
    </physiologicalReaction>
</comment>
<comment type="subunit">
    <text evidence="2">Core subunit of respiratory chain NADH dehydrogenase (Complex I) which is composed of 45 different subunits.</text>
</comment>
<comment type="subcellular location">
    <subcellularLocation>
        <location evidence="2">Mitochondrion inner membrane</location>
        <topology evidence="3">Multi-pass membrane protein</topology>
    </subcellularLocation>
</comment>
<comment type="similarity">
    <text evidence="4">Belongs to the complex I subunit 4L family.</text>
</comment>
<name>NU4LM_HYDLE</name>